<protein>
    <recommendedName>
        <fullName evidence="1">Apolipoprotein N-acyltransferase</fullName>
        <shortName evidence="1">ALP N-acyltransferase</shortName>
        <ecNumber evidence="1">2.3.1.269</ecNumber>
    </recommendedName>
</protein>
<accession>Q68X09</accession>
<reference key="1">
    <citation type="journal article" date="2004" name="J. Bacteriol.">
        <title>Complete genome sequence of Rickettsia typhi and comparison with sequences of other Rickettsiae.</title>
        <authorList>
            <person name="McLeod M.P."/>
            <person name="Qin X."/>
            <person name="Karpathy S.E."/>
            <person name="Gioia J."/>
            <person name="Highlander S.K."/>
            <person name="Fox G.E."/>
            <person name="McNeill T.Z."/>
            <person name="Jiang H."/>
            <person name="Muzny D."/>
            <person name="Jacob L.S."/>
            <person name="Hawes A.C."/>
            <person name="Sodergren E."/>
            <person name="Gill R."/>
            <person name="Hume J."/>
            <person name="Morgan M."/>
            <person name="Fan G."/>
            <person name="Amin A.G."/>
            <person name="Gibbs R.A."/>
            <person name="Hong C."/>
            <person name="Yu X.-J."/>
            <person name="Walker D.H."/>
            <person name="Weinstock G.M."/>
        </authorList>
    </citation>
    <scope>NUCLEOTIDE SEQUENCE [LARGE SCALE GENOMIC DNA]</scope>
    <source>
        <strain>ATCC VR-144 / Wilmington</strain>
    </source>
</reference>
<proteinExistence type="inferred from homology"/>
<dbReference type="EC" id="2.3.1.269" evidence="1"/>
<dbReference type="EMBL" id="AE017197">
    <property type="protein sequence ID" value="AAU03833.1"/>
    <property type="molecule type" value="Genomic_DNA"/>
</dbReference>
<dbReference type="RefSeq" id="WP_011190817.1">
    <property type="nucleotide sequence ID" value="NC_006142.1"/>
</dbReference>
<dbReference type="SMR" id="Q68X09"/>
<dbReference type="KEGG" id="rty:RT0354"/>
<dbReference type="eggNOG" id="COG0815">
    <property type="taxonomic scope" value="Bacteria"/>
</dbReference>
<dbReference type="HOGENOM" id="CLU_019563_3_1_5"/>
<dbReference type="OrthoDB" id="9804277at2"/>
<dbReference type="UniPathway" id="UPA00666"/>
<dbReference type="Proteomes" id="UP000000604">
    <property type="component" value="Chromosome"/>
</dbReference>
<dbReference type="GO" id="GO:0005886">
    <property type="term" value="C:plasma membrane"/>
    <property type="evidence" value="ECO:0007669"/>
    <property type="project" value="UniProtKB-SubCell"/>
</dbReference>
<dbReference type="GO" id="GO:0016410">
    <property type="term" value="F:N-acyltransferase activity"/>
    <property type="evidence" value="ECO:0007669"/>
    <property type="project" value="UniProtKB-UniRule"/>
</dbReference>
<dbReference type="GO" id="GO:0042158">
    <property type="term" value="P:lipoprotein biosynthetic process"/>
    <property type="evidence" value="ECO:0007669"/>
    <property type="project" value="UniProtKB-UniRule"/>
</dbReference>
<dbReference type="CDD" id="cd07571">
    <property type="entry name" value="ALP_N-acyl_transferase"/>
    <property type="match status" value="1"/>
</dbReference>
<dbReference type="Gene3D" id="3.60.110.10">
    <property type="entry name" value="Carbon-nitrogen hydrolase"/>
    <property type="match status" value="1"/>
</dbReference>
<dbReference type="HAMAP" id="MF_01148">
    <property type="entry name" value="Lnt"/>
    <property type="match status" value="1"/>
</dbReference>
<dbReference type="InterPro" id="IPR004563">
    <property type="entry name" value="Apolipo_AcylTrfase"/>
</dbReference>
<dbReference type="InterPro" id="IPR003010">
    <property type="entry name" value="C-N_Hydrolase"/>
</dbReference>
<dbReference type="InterPro" id="IPR036526">
    <property type="entry name" value="C-N_Hydrolase_sf"/>
</dbReference>
<dbReference type="InterPro" id="IPR045378">
    <property type="entry name" value="LNT_N"/>
</dbReference>
<dbReference type="NCBIfam" id="TIGR00546">
    <property type="entry name" value="lnt"/>
    <property type="match status" value="1"/>
</dbReference>
<dbReference type="PANTHER" id="PTHR38686">
    <property type="entry name" value="APOLIPOPROTEIN N-ACYLTRANSFERASE"/>
    <property type="match status" value="1"/>
</dbReference>
<dbReference type="PANTHER" id="PTHR38686:SF1">
    <property type="entry name" value="APOLIPOPROTEIN N-ACYLTRANSFERASE"/>
    <property type="match status" value="1"/>
</dbReference>
<dbReference type="Pfam" id="PF00795">
    <property type="entry name" value="CN_hydrolase"/>
    <property type="match status" value="1"/>
</dbReference>
<dbReference type="Pfam" id="PF20154">
    <property type="entry name" value="LNT_N"/>
    <property type="match status" value="1"/>
</dbReference>
<dbReference type="SUPFAM" id="SSF56317">
    <property type="entry name" value="Carbon-nitrogen hydrolase"/>
    <property type="match status" value="1"/>
</dbReference>
<dbReference type="PROSITE" id="PS50263">
    <property type="entry name" value="CN_HYDROLASE"/>
    <property type="match status" value="1"/>
</dbReference>
<comment type="function">
    <text evidence="1">Catalyzes the phospholipid dependent N-acylation of the N-terminal cysteine of apolipoprotein, the last step in lipoprotein maturation.</text>
</comment>
<comment type="catalytic activity">
    <reaction evidence="1">
        <text>N-terminal S-1,2-diacyl-sn-glyceryl-L-cysteinyl-[lipoprotein] + a glycerophospholipid = N-acyl-S-1,2-diacyl-sn-glyceryl-L-cysteinyl-[lipoprotein] + a 2-acyl-sn-glycero-3-phospholipid + H(+)</text>
        <dbReference type="Rhea" id="RHEA:48228"/>
        <dbReference type="Rhea" id="RHEA-COMP:14681"/>
        <dbReference type="Rhea" id="RHEA-COMP:14684"/>
        <dbReference type="ChEBI" id="CHEBI:15378"/>
        <dbReference type="ChEBI" id="CHEBI:136912"/>
        <dbReference type="ChEBI" id="CHEBI:140656"/>
        <dbReference type="ChEBI" id="CHEBI:140657"/>
        <dbReference type="ChEBI" id="CHEBI:140660"/>
        <dbReference type="EC" id="2.3.1.269"/>
    </reaction>
</comment>
<comment type="pathway">
    <text evidence="1">Protein modification; lipoprotein biosynthesis (N-acyl transfer).</text>
</comment>
<comment type="subcellular location">
    <subcellularLocation>
        <location evidence="1">Cell inner membrane</location>
        <topology evidence="1">Multi-pass membrane protein</topology>
    </subcellularLocation>
</comment>
<comment type="similarity">
    <text evidence="1">Belongs to the CN hydrolase family. Apolipoprotein N-acyltransferase subfamily.</text>
</comment>
<keyword id="KW-0012">Acyltransferase</keyword>
<keyword id="KW-0997">Cell inner membrane</keyword>
<keyword id="KW-1003">Cell membrane</keyword>
<keyword id="KW-0472">Membrane</keyword>
<keyword id="KW-0808">Transferase</keyword>
<keyword id="KW-0812">Transmembrane</keyword>
<keyword id="KW-1133">Transmembrane helix</keyword>
<evidence type="ECO:0000255" key="1">
    <source>
        <dbReference type="HAMAP-Rule" id="MF_01148"/>
    </source>
</evidence>
<organism>
    <name type="scientific">Rickettsia typhi (strain ATCC VR-144 / Wilmington)</name>
    <dbReference type="NCBI Taxonomy" id="257363"/>
    <lineage>
        <taxon>Bacteria</taxon>
        <taxon>Pseudomonadati</taxon>
        <taxon>Pseudomonadota</taxon>
        <taxon>Alphaproteobacteria</taxon>
        <taxon>Rickettsiales</taxon>
        <taxon>Rickettsiaceae</taxon>
        <taxon>Rickettsieae</taxon>
        <taxon>Rickettsia</taxon>
        <taxon>typhus group</taxon>
    </lineage>
</organism>
<sequence>MYKTKIICFLLGILSGLVFAPTFFIPALFTFSYLCYIVQKSQNWQAAAKFGYLFGFGHFLSGMYWISIGVSVYIADFWWAIPFALFGLPIILAFFISTNCTLSFFAKNNKYYQLIFCLLWVLFEWIRSWICTGLPWNLIGYAFSFSEILIQPLSITGIYGLSFIVIYIATSAYPVFSKNFTKLKILLASSMLILTVMVIYGAMRVSTNPTHFTDIKVRLVQPSIPQTAKWDEEEFWHNLMLHINLSEKLEPTDLIIWSEAALVVPDDIPQVKLELLNMLNSTNAILITGGISDNKKHGDKFELYSAMYALDKNNHKLFEYHKSHLVPFGEYMPLKKILPFKKLTHGLIDYKEGNGGLVYIKKYHLKIKPLICYESIFPNFVQTNNEIADVIINITNDSWYGKSSGPYQHFHISRSRAVENGLPMIRVANNGISAIVDPVGRIVKKLNLNEINYIQGLIPQKLTTPTIFSQFGNFAMLLPIVFILLIHYLLSLIFDD</sequence>
<name>LNT_RICTY</name>
<gene>
    <name evidence="1" type="primary">lnt</name>
    <name type="ordered locus">RT0354</name>
</gene>
<feature type="chain" id="PRO_0000278000" description="Apolipoprotein N-acyltransferase">
    <location>
        <begin position="1"/>
        <end position="496"/>
    </location>
</feature>
<feature type="transmembrane region" description="Helical" evidence="1">
    <location>
        <begin position="6"/>
        <end position="26"/>
    </location>
</feature>
<feature type="transmembrane region" description="Helical" evidence="1">
    <location>
        <begin position="50"/>
        <end position="70"/>
    </location>
</feature>
<feature type="transmembrane region" description="Helical" evidence="1">
    <location>
        <begin position="77"/>
        <end position="97"/>
    </location>
</feature>
<feature type="transmembrane region" description="Helical" evidence="1">
    <location>
        <begin position="114"/>
        <end position="134"/>
    </location>
</feature>
<feature type="transmembrane region" description="Helical" evidence="1">
    <location>
        <begin position="148"/>
        <end position="168"/>
    </location>
</feature>
<feature type="transmembrane region" description="Helical" evidence="1">
    <location>
        <begin position="183"/>
        <end position="203"/>
    </location>
</feature>
<feature type="transmembrane region" description="Helical" evidence="1">
    <location>
        <begin position="474"/>
        <end position="494"/>
    </location>
</feature>
<feature type="domain" description="CN hydrolase" evidence="1">
    <location>
        <begin position="220"/>
        <end position="464"/>
    </location>
</feature>
<feature type="active site" description="Proton acceptor" evidence="1">
    <location>
        <position position="259"/>
    </location>
</feature>
<feature type="active site" evidence="1">
    <location>
        <position position="322"/>
    </location>
</feature>
<feature type="active site" description="Nucleophile" evidence="1">
    <location>
        <position position="372"/>
    </location>
</feature>